<protein>
    <recommendedName>
        <fullName>ATP synthase subunit b-delta</fullName>
    </recommendedName>
    <domain>
        <recommendedName>
            <fullName>ATP synthase subunit b</fullName>
        </recommendedName>
        <alternativeName>
            <fullName>ATP synthase F(0) sector subunit b 2</fullName>
        </alternativeName>
        <alternativeName>
            <fullName>ATPase subunit I 2</fullName>
        </alternativeName>
        <alternativeName>
            <fullName>F-type ATPase subunit b 2</fullName>
            <shortName>F-ATPase subunit b 2</shortName>
        </alternativeName>
    </domain>
    <domain>
        <recommendedName>
            <fullName>ATP synthase subunit delta</fullName>
        </recommendedName>
        <alternativeName>
            <fullName>ATP synthase F(1) sector subunit delta</fullName>
        </alternativeName>
        <alternativeName>
            <fullName>F-type ATPase subunit delta</fullName>
            <shortName>F-ATPase subunit delta</shortName>
        </alternativeName>
    </domain>
</protein>
<feature type="chain" id="PRO_0000370864" description="ATP synthase subunit b-delta">
    <location>
        <begin position="1"/>
        <end position="446"/>
    </location>
</feature>
<feature type="transmembrane region" description="Helical" evidence="2">
    <location>
        <begin position="4"/>
        <end position="24"/>
    </location>
</feature>
<feature type="region of interest" description="ATP synthase subunit b">
    <location>
        <begin position="1"/>
        <end position="168"/>
    </location>
</feature>
<feature type="region of interest" description="ATP synthase subunit delta">
    <location>
        <begin position="169"/>
        <end position="446"/>
    </location>
</feature>
<comment type="function">
    <text evidence="1">F(1)F(0) ATP synthase produces ATP from ADP in the presence of a proton or sodium gradient. F-type ATPases consist of two structural domains, F(1) containing the extramembraneous catalytic core and F(0) containing the membrane proton channel, linked together by a central stalk and a peripheral stalk. During catalysis, ATP synthesis in the catalytic domain of F(1) is coupled via a rotary mechanism of the central stalk subunits to proton translocation (By similarity).</text>
</comment>
<comment type="function">
    <text evidence="1">This fusion protein includes a component of the F(0) channel (subunit b) and of the F(1) subunit (subunit delta). Two copies of subunit b and one of delta together form the peripheral 'stator' stalk which links F(1) to F(0) (By similarity).</text>
</comment>
<comment type="subunit">
    <text evidence="1">F-type ATPases have 2 components, F(1) - the catalytic core - and F(0) - the membrane proton channel. F(1) has five subunits: alpha(3), beta(3), gamma(1), delta(1), epsilon(1). F(0) has three main subunits: a(1), b(2) and c(10-14). The alpha and beta chains form an alternating ring which encloses part of the gamma chain. F(1) is attached to F(0) by a central stalk formed by the gamma and epsilon chains, while a peripheral stalk is formed by the delta and b chains (By similarity).</text>
</comment>
<comment type="subcellular location">
    <subcellularLocation>
        <location evidence="1">Cell membrane</location>
        <topology evidence="1">Single-pass membrane protein</topology>
    </subcellularLocation>
</comment>
<comment type="similarity">
    <text evidence="3">In the N-terminal section; belongs to the ATPase B chain family.</text>
</comment>
<comment type="similarity">
    <text evidence="3">In the C-terminal section; belongs to the ATPase delta chain family.</text>
</comment>
<keyword id="KW-0066">ATP synthesis</keyword>
<keyword id="KW-1003">Cell membrane</keyword>
<keyword id="KW-0138">CF(0)</keyword>
<keyword id="KW-0139">CF(1)</keyword>
<keyword id="KW-0375">Hydrogen ion transport</keyword>
<keyword id="KW-0406">Ion transport</keyword>
<keyword id="KW-0472">Membrane</keyword>
<keyword id="KW-0511">Multifunctional enzyme</keyword>
<keyword id="KW-0812">Transmembrane</keyword>
<keyword id="KW-1133">Transmembrane helix</keyword>
<keyword id="KW-0813">Transport</keyword>
<organism>
    <name type="scientific">Mycobacterium leprae (strain Br4923)</name>
    <dbReference type="NCBI Taxonomy" id="561304"/>
    <lineage>
        <taxon>Bacteria</taxon>
        <taxon>Bacillati</taxon>
        <taxon>Actinomycetota</taxon>
        <taxon>Actinomycetes</taxon>
        <taxon>Mycobacteriales</taxon>
        <taxon>Mycobacteriaceae</taxon>
        <taxon>Mycobacterium</taxon>
    </lineage>
</organism>
<reference key="1">
    <citation type="journal article" date="2009" name="Nat. Genet.">
        <title>Comparative genomic and phylogeographic analysis of Mycobacterium leprae.</title>
        <authorList>
            <person name="Monot M."/>
            <person name="Honore N."/>
            <person name="Garnier T."/>
            <person name="Zidane N."/>
            <person name="Sherafi D."/>
            <person name="Paniz-Mondolfi A."/>
            <person name="Matsuoka M."/>
            <person name="Taylor G.M."/>
            <person name="Donoghue H.D."/>
            <person name="Bouwman A."/>
            <person name="Mays S."/>
            <person name="Watson C."/>
            <person name="Lockwood D."/>
            <person name="Khamispour A."/>
            <person name="Dowlati Y."/>
            <person name="Jianping S."/>
            <person name="Rea T.H."/>
            <person name="Vera-Cabrera L."/>
            <person name="Stefani M.M."/>
            <person name="Banu S."/>
            <person name="Macdonald M."/>
            <person name="Sapkota B.R."/>
            <person name="Spencer J.S."/>
            <person name="Thomas J."/>
            <person name="Harshman K."/>
            <person name="Singh P."/>
            <person name="Busso P."/>
            <person name="Gattiker A."/>
            <person name="Rougemont J."/>
            <person name="Brennan P.J."/>
            <person name="Cole S.T."/>
        </authorList>
    </citation>
    <scope>NUCLEOTIDE SEQUENCE [LARGE SCALE GENOMIC DNA]</scope>
    <source>
        <strain>Br4923</strain>
    </source>
</reference>
<sequence length="446" mass="48939">MSTFIGQLVGFAAIVYLVWWYVVPPVCRLMRARRDAVRQQLTEAAEAADRLVEASQAHTKATEDAKVEAQRVVKEAVEDAKRIVEQLQAQADVEAERIKLQGARQVELLRAQLTRQLRLKFGHESVRQAAELVRNHVADAVQQSATVDRFLDDLDAMTPKGADVEYPLLAKMRSASRRALVDLADRFGAIAKSLDNQALYTLAGELVSVAKMLDREIVVTRYLTVPVEDEAPRVKLIDRLVSAHVGDPTMEILRAAVSERWSANTDLVDALEHISRQALLEVAEREDQIDEVEDQVFRFSRILDVAPRLAILLDDYAVPADSRVRLLCNVLQSASSVVNPIAVALLSQTVELLRGQPAKEAILFLAEVAVARRGEVVAQVSAAAEISDAQRTRLTEVLSRIYGHPVTVQMQIDAALLGGLSIVVGDEVIDGTLSSCLVAAEAALPD</sequence>
<accession>B8ZR39</accession>
<proteinExistence type="inferred from homology"/>
<dbReference type="EMBL" id="FM211192">
    <property type="protein sequence ID" value="CAR71237.1"/>
    <property type="molecule type" value="Genomic_DNA"/>
</dbReference>
<dbReference type="SMR" id="B8ZR39"/>
<dbReference type="KEGG" id="mlb:MLBr01142"/>
<dbReference type="HOGENOM" id="CLU_722652_0_0_11"/>
<dbReference type="Proteomes" id="UP000006900">
    <property type="component" value="Chromosome"/>
</dbReference>
<dbReference type="GO" id="GO:0005886">
    <property type="term" value="C:plasma membrane"/>
    <property type="evidence" value="ECO:0007669"/>
    <property type="project" value="UniProtKB-SubCell"/>
</dbReference>
<dbReference type="GO" id="GO:0045259">
    <property type="term" value="C:proton-transporting ATP synthase complex"/>
    <property type="evidence" value="ECO:0007669"/>
    <property type="project" value="UniProtKB-KW"/>
</dbReference>
<dbReference type="GO" id="GO:0046933">
    <property type="term" value="F:proton-transporting ATP synthase activity, rotational mechanism"/>
    <property type="evidence" value="ECO:0007669"/>
    <property type="project" value="UniProtKB-UniRule"/>
</dbReference>
<dbReference type="CDD" id="cd06503">
    <property type="entry name" value="ATP-synt_Fo_b"/>
    <property type="match status" value="1"/>
</dbReference>
<dbReference type="Gene3D" id="1.20.5.620">
    <property type="entry name" value="F1F0 ATP synthase subunit B, membrane domain"/>
    <property type="match status" value="1"/>
</dbReference>
<dbReference type="HAMAP" id="MF_01398">
    <property type="entry name" value="ATP_synth_b_bprime"/>
    <property type="match status" value="1"/>
</dbReference>
<dbReference type="HAMAP" id="MF_01416">
    <property type="entry name" value="ATP_synth_delta_bact"/>
    <property type="match status" value="1"/>
</dbReference>
<dbReference type="InterPro" id="IPR028987">
    <property type="entry name" value="ATP_synth_B-like_membr_sf"/>
</dbReference>
<dbReference type="InterPro" id="IPR002146">
    <property type="entry name" value="ATP_synth_b/b'su_bac/chlpt"/>
</dbReference>
<dbReference type="InterPro" id="IPR000711">
    <property type="entry name" value="ATPase_OSCP/dsu"/>
</dbReference>
<dbReference type="NCBIfam" id="NF009961">
    <property type="entry name" value="PRK13428.1"/>
    <property type="match status" value="1"/>
</dbReference>
<dbReference type="NCBIfam" id="NF009967">
    <property type="entry name" value="PRK13430.1"/>
    <property type="match status" value="1"/>
</dbReference>
<dbReference type="PANTHER" id="PTHR11910">
    <property type="entry name" value="ATP SYNTHASE DELTA CHAIN"/>
    <property type="match status" value="1"/>
</dbReference>
<dbReference type="Pfam" id="PF00430">
    <property type="entry name" value="ATP-synt_B"/>
    <property type="match status" value="1"/>
</dbReference>
<dbReference type="Pfam" id="PF00213">
    <property type="entry name" value="OSCP"/>
    <property type="match status" value="1"/>
</dbReference>
<dbReference type="PRINTS" id="PR00125">
    <property type="entry name" value="ATPASEDELTA"/>
</dbReference>
<dbReference type="SUPFAM" id="SSF81573">
    <property type="entry name" value="F1F0 ATP synthase subunit B, membrane domain"/>
    <property type="match status" value="1"/>
</dbReference>
<evidence type="ECO:0000250" key="1"/>
<evidence type="ECO:0000255" key="2"/>
<evidence type="ECO:0000305" key="3"/>
<gene>
    <name type="primary">atpFH</name>
    <name type="synonym">atpF</name>
    <name type="synonym">atpH</name>
    <name type="ordered locus">MLBr01142</name>
</gene>
<name>ATPFD_MYCLB</name>